<proteinExistence type="inferred from homology"/>
<dbReference type="EC" id="4.3.3.7" evidence="1"/>
<dbReference type="EMBL" id="CP000776">
    <property type="protein sequence ID" value="ABS52531.1"/>
    <property type="molecule type" value="Genomic_DNA"/>
</dbReference>
<dbReference type="RefSeq" id="WP_012108458.1">
    <property type="nucleotide sequence ID" value="NC_009714.1"/>
</dbReference>
<dbReference type="SMR" id="A7I0Y0"/>
<dbReference type="STRING" id="360107.CHAB381_0583"/>
<dbReference type="KEGG" id="cha:CHAB381_0583"/>
<dbReference type="eggNOG" id="COG0329">
    <property type="taxonomic scope" value="Bacteria"/>
</dbReference>
<dbReference type="HOGENOM" id="CLU_049343_7_1_7"/>
<dbReference type="OrthoDB" id="9782828at2"/>
<dbReference type="UniPathway" id="UPA00034">
    <property type="reaction ID" value="UER00017"/>
</dbReference>
<dbReference type="Proteomes" id="UP000002407">
    <property type="component" value="Chromosome"/>
</dbReference>
<dbReference type="GO" id="GO:0005829">
    <property type="term" value="C:cytosol"/>
    <property type="evidence" value="ECO:0007669"/>
    <property type="project" value="TreeGrafter"/>
</dbReference>
<dbReference type="GO" id="GO:0008840">
    <property type="term" value="F:4-hydroxy-tetrahydrodipicolinate synthase activity"/>
    <property type="evidence" value="ECO:0007669"/>
    <property type="project" value="UniProtKB-UniRule"/>
</dbReference>
<dbReference type="GO" id="GO:0019877">
    <property type="term" value="P:diaminopimelate biosynthetic process"/>
    <property type="evidence" value="ECO:0007669"/>
    <property type="project" value="UniProtKB-UniRule"/>
</dbReference>
<dbReference type="GO" id="GO:0009089">
    <property type="term" value="P:lysine biosynthetic process via diaminopimelate"/>
    <property type="evidence" value="ECO:0007669"/>
    <property type="project" value="UniProtKB-UniRule"/>
</dbReference>
<dbReference type="CDD" id="cd00950">
    <property type="entry name" value="DHDPS"/>
    <property type="match status" value="1"/>
</dbReference>
<dbReference type="Gene3D" id="3.20.20.70">
    <property type="entry name" value="Aldolase class I"/>
    <property type="match status" value="1"/>
</dbReference>
<dbReference type="HAMAP" id="MF_00418">
    <property type="entry name" value="DapA"/>
    <property type="match status" value="1"/>
</dbReference>
<dbReference type="InterPro" id="IPR013785">
    <property type="entry name" value="Aldolase_TIM"/>
</dbReference>
<dbReference type="InterPro" id="IPR005263">
    <property type="entry name" value="DapA"/>
</dbReference>
<dbReference type="InterPro" id="IPR002220">
    <property type="entry name" value="DapA-like"/>
</dbReference>
<dbReference type="InterPro" id="IPR020625">
    <property type="entry name" value="Schiff_base-form_aldolases_AS"/>
</dbReference>
<dbReference type="NCBIfam" id="TIGR00674">
    <property type="entry name" value="dapA"/>
    <property type="match status" value="1"/>
</dbReference>
<dbReference type="PANTHER" id="PTHR12128:SF66">
    <property type="entry name" value="4-HYDROXY-2-OXOGLUTARATE ALDOLASE, MITOCHONDRIAL"/>
    <property type="match status" value="1"/>
</dbReference>
<dbReference type="PANTHER" id="PTHR12128">
    <property type="entry name" value="DIHYDRODIPICOLINATE SYNTHASE"/>
    <property type="match status" value="1"/>
</dbReference>
<dbReference type="Pfam" id="PF00701">
    <property type="entry name" value="DHDPS"/>
    <property type="match status" value="1"/>
</dbReference>
<dbReference type="PIRSF" id="PIRSF001365">
    <property type="entry name" value="DHDPS"/>
    <property type="match status" value="1"/>
</dbReference>
<dbReference type="PRINTS" id="PR00146">
    <property type="entry name" value="DHPICSNTHASE"/>
</dbReference>
<dbReference type="SMART" id="SM01130">
    <property type="entry name" value="DHDPS"/>
    <property type="match status" value="1"/>
</dbReference>
<dbReference type="SUPFAM" id="SSF51569">
    <property type="entry name" value="Aldolase"/>
    <property type="match status" value="1"/>
</dbReference>
<dbReference type="PROSITE" id="PS00666">
    <property type="entry name" value="DHDPS_2"/>
    <property type="match status" value="1"/>
</dbReference>
<feature type="chain" id="PRO_1000050171" description="4-hydroxy-tetrahydrodipicolinate synthase">
    <location>
        <begin position="1"/>
        <end position="298"/>
    </location>
</feature>
<feature type="active site" description="Proton donor/acceptor" evidence="1">
    <location>
        <position position="137"/>
    </location>
</feature>
<feature type="active site" description="Schiff-base intermediate with substrate" evidence="1">
    <location>
        <position position="166"/>
    </location>
</feature>
<feature type="binding site" evidence="1">
    <location>
        <position position="48"/>
    </location>
    <ligand>
        <name>pyruvate</name>
        <dbReference type="ChEBI" id="CHEBI:15361"/>
    </ligand>
</feature>
<feature type="binding site" evidence="1">
    <location>
        <position position="207"/>
    </location>
    <ligand>
        <name>pyruvate</name>
        <dbReference type="ChEBI" id="CHEBI:15361"/>
    </ligand>
</feature>
<feature type="site" description="Part of a proton relay during catalysis" evidence="1">
    <location>
        <position position="47"/>
    </location>
</feature>
<feature type="site" description="Part of a proton relay during catalysis" evidence="1">
    <location>
        <position position="111"/>
    </location>
</feature>
<protein>
    <recommendedName>
        <fullName evidence="1">4-hydroxy-tetrahydrodipicolinate synthase</fullName>
        <shortName evidence="1">HTPA synthase</shortName>
        <ecNumber evidence="1">4.3.3.7</ecNumber>
    </recommendedName>
</protein>
<reference key="1">
    <citation type="submission" date="2007-07" db="EMBL/GenBank/DDBJ databases">
        <title>Complete genome sequence of Campylobacter hominis ATCC BAA-381, a commensal isolated from the human gastrointestinal tract.</title>
        <authorList>
            <person name="Fouts D.E."/>
            <person name="Mongodin E.F."/>
            <person name="Puiu D."/>
            <person name="Sebastian Y."/>
            <person name="Miller W.G."/>
            <person name="Mandrell R.E."/>
            <person name="Nelson K.E."/>
        </authorList>
    </citation>
    <scope>NUCLEOTIDE SEQUENCE [LARGE SCALE GENOMIC DNA]</scope>
    <source>
        <strain>ATCC BAA-381 / DSM 21671 / CCUG 45161 / LMG 19568 / NCTC 13146 / CH001A</strain>
    </source>
</reference>
<comment type="function">
    <text evidence="1">Catalyzes the condensation of (S)-aspartate-beta-semialdehyde [(S)-ASA] and pyruvate to 4-hydroxy-tetrahydrodipicolinate (HTPA).</text>
</comment>
<comment type="catalytic activity">
    <reaction evidence="1">
        <text>L-aspartate 4-semialdehyde + pyruvate = (2S,4S)-4-hydroxy-2,3,4,5-tetrahydrodipicolinate + H2O + H(+)</text>
        <dbReference type="Rhea" id="RHEA:34171"/>
        <dbReference type="ChEBI" id="CHEBI:15361"/>
        <dbReference type="ChEBI" id="CHEBI:15377"/>
        <dbReference type="ChEBI" id="CHEBI:15378"/>
        <dbReference type="ChEBI" id="CHEBI:67139"/>
        <dbReference type="ChEBI" id="CHEBI:537519"/>
        <dbReference type="EC" id="4.3.3.7"/>
    </reaction>
</comment>
<comment type="pathway">
    <text evidence="1">Amino-acid biosynthesis; L-lysine biosynthesis via DAP pathway; (S)-tetrahydrodipicolinate from L-aspartate: step 3/4.</text>
</comment>
<comment type="subunit">
    <text evidence="1">Homotetramer; dimer of dimers.</text>
</comment>
<comment type="subcellular location">
    <subcellularLocation>
        <location evidence="1">Cytoplasm</location>
    </subcellularLocation>
</comment>
<comment type="similarity">
    <text evidence="1">Belongs to the DapA family.</text>
</comment>
<comment type="caution">
    <text evidence="2">Was originally thought to be a dihydrodipicolinate synthase (DHDPS), catalyzing the condensation of (S)-aspartate-beta-semialdehyde [(S)-ASA] and pyruvate to dihydrodipicolinate (DHDP). However, it was shown in E.coli that the product of the enzymatic reaction is not dihydrodipicolinate but in fact (4S)-4-hydroxy-2,3,4,5-tetrahydro-(2S)-dipicolinic acid (HTPA), and that the consecutive dehydration reaction leading to DHDP is not spontaneous but catalyzed by DapB.</text>
</comment>
<name>DAPA_CAMHC</name>
<sequence>MESTLIKGSMVAIITPFKNGKIDEVGYEKLIKREIANGINVIVPVGTTGESATLTHEEHRVCIEIAVDTCKGTDVKVLAGAGSNATHEAIGLAKFAQDHGADAVLSVAPYYNKPTQQGLYLHYKEIANSVEIPVLLYNVPGRTGCDIKADTVIRLFRECKNIIGVKEASGDIDRCVDLLSREPHMTVVSGEDSINYPILANGGKGVISVTANLLPDYVAKLCDYALKGDFVKSREINNELYELNKILFVESNPVPIKAAMYIAGLIETLEYRLPLCEPSKENYKKIEETIKKYKIKGL</sequence>
<organism>
    <name type="scientific">Campylobacter hominis (strain ATCC BAA-381 / DSM 21671 / CCUG 45161 / LMG 19568 / NCTC 13146 / CH001A)</name>
    <dbReference type="NCBI Taxonomy" id="360107"/>
    <lineage>
        <taxon>Bacteria</taxon>
        <taxon>Pseudomonadati</taxon>
        <taxon>Campylobacterota</taxon>
        <taxon>Epsilonproteobacteria</taxon>
        <taxon>Campylobacterales</taxon>
        <taxon>Campylobacteraceae</taxon>
        <taxon>Campylobacter</taxon>
    </lineage>
</organism>
<gene>
    <name evidence="1" type="primary">dapA</name>
    <name type="ordered locus">CHAB381_0583</name>
</gene>
<keyword id="KW-0028">Amino-acid biosynthesis</keyword>
<keyword id="KW-0963">Cytoplasm</keyword>
<keyword id="KW-0220">Diaminopimelate biosynthesis</keyword>
<keyword id="KW-0456">Lyase</keyword>
<keyword id="KW-0457">Lysine biosynthesis</keyword>
<keyword id="KW-1185">Reference proteome</keyword>
<keyword id="KW-0704">Schiff base</keyword>
<accession>A7I0Y0</accession>
<evidence type="ECO:0000255" key="1">
    <source>
        <dbReference type="HAMAP-Rule" id="MF_00418"/>
    </source>
</evidence>
<evidence type="ECO:0000305" key="2"/>